<evidence type="ECO:0000255" key="1">
    <source>
        <dbReference type="HAMAP-Rule" id="MF_00115"/>
    </source>
</evidence>
<accession>Q2JLN5</accession>
<organism>
    <name type="scientific">Synechococcus sp. (strain JA-2-3B'a(2-13))</name>
    <name type="common">Cyanobacteria bacterium Yellowstone B-Prime</name>
    <dbReference type="NCBI Taxonomy" id="321332"/>
    <lineage>
        <taxon>Bacteria</taxon>
        <taxon>Bacillati</taxon>
        <taxon>Cyanobacteriota</taxon>
        <taxon>Cyanophyceae</taxon>
        <taxon>Synechococcales</taxon>
        <taxon>Synechococcaceae</taxon>
        <taxon>Synechococcus</taxon>
    </lineage>
</organism>
<keyword id="KW-0997">Cell inner membrane</keyword>
<keyword id="KW-1003">Cell membrane</keyword>
<keyword id="KW-0407">Ion channel</keyword>
<keyword id="KW-0406">Ion transport</keyword>
<keyword id="KW-0472">Membrane</keyword>
<keyword id="KW-1185">Reference proteome</keyword>
<keyword id="KW-0812">Transmembrane</keyword>
<keyword id="KW-1133">Transmembrane helix</keyword>
<keyword id="KW-0813">Transport</keyword>
<feature type="chain" id="PRO_0000238043" description="Large-conductance mechanosensitive channel">
    <location>
        <begin position="1"/>
        <end position="132"/>
    </location>
</feature>
<feature type="transmembrane region" description="Helical" evidence="1">
    <location>
        <begin position="11"/>
        <end position="31"/>
    </location>
</feature>
<feature type="transmembrane region" description="Helical" evidence="1">
    <location>
        <begin position="75"/>
        <end position="95"/>
    </location>
</feature>
<sequence>MRAFLEEFKNFISRGNALDLAVGVVIGGAFGKIVTSFVADLFTPVLGLMIGGVNFQHLAWEIGGSPEDPVTINYGSFLQAVFDFVIIAFAIFLLVKAINTLQRKEEESPPTLPPPEVVLLTEIRDILNRHSQ</sequence>
<proteinExistence type="inferred from homology"/>
<comment type="function">
    <text evidence="1">Channel that opens in response to stretch forces in the membrane lipid bilayer. May participate in the regulation of osmotic pressure changes within the cell.</text>
</comment>
<comment type="subunit">
    <text evidence="1">Homopentamer.</text>
</comment>
<comment type="subcellular location">
    <subcellularLocation>
        <location evidence="1">Cell inner membrane</location>
        <topology evidence="1">Multi-pass membrane protein</topology>
    </subcellularLocation>
</comment>
<comment type="similarity">
    <text evidence="1">Belongs to the MscL family.</text>
</comment>
<reference key="1">
    <citation type="journal article" date="2007" name="ISME J.">
        <title>Population level functional diversity in a microbial community revealed by comparative genomic and metagenomic analyses.</title>
        <authorList>
            <person name="Bhaya D."/>
            <person name="Grossman A.R."/>
            <person name="Steunou A.-S."/>
            <person name="Khuri N."/>
            <person name="Cohan F.M."/>
            <person name="Hamamura N."/>
            <person name="Melendrez M.C."/>
            <person name="Bateson M.M."/>
            <person name="Ward D.M."/>
            <person name="Heidelberg J.F."/>
        </authorList>
    </citation>
    <scope>NUCLEOTIDE SEQUENCE [LARGE SCALE GENOMIC DNA]</scope>
    <source>
        <strain>JA-2-3B'a(2-13)</strain>
    </source>
</reference>
<gene>
    <name evidence="1" type="primary">mscL</name>
    <name type="ordered locus">CYB_1404</name>
</gene>
<dbReference type="EMBL" id="CP000240">
    <property type="protein sequence ID" value="ABD02372.1"/>
    <property type="molecule type" value="Genomic_DNA"/>
</dbReference>
<dbReference type="RefSeq" id="WP_011433020.1">
    <property type="nucleotide sequence ID" value="NC_007776.1"/>
</dbReference>
<dbReference type="SMR" id="Q2JLN5"/>
<dbReference type="STRING" id="321332.CYB_1404"/>
<dbReference type="KEGG" id="cyb:CYB_1404"/>
<dbReference type="eggNOG" id="COG1970">
    <property type="taxonomic scope" value="Bacteria"/>
</dbReference>
<dbReference type="HOGENOM" id="CLU_095787_0_0_3"/>
<dbReference type="OrthoDB" id="9810350at2"/>
<dbReference type="Proteomes" id="UP000001938">
    <property type="component" value="Chromosome"/>
</dbReference>
<dbReference type="GO" id="GO:0005886">
    <property type="term" value="C:plasma membrane"/>
    <property type="evidence" value="ECO:0007669"/>
    <property type="project" value="UniProtKB-SubCell"/>
</dbReference>
<dbReference type="GO" id="GO:0008381">
    <property type="term" value="F:mechanosensitive monoatomic ion channel activity"/>
    <property type="evidence" value="ECO:0007669"/>
    <property type="project" value="UniProtKB-UniRule"/>
</dbReference>
<dbReference type="Gene3D" id="1.10.1200.120">
    <property type="entry name" value="Large-conductance mechanosensitive channel, MscL, domain 1"/>
    <property type="match status" value="1"/>
</dbReference>
<dbReference type="HAMAP" id="MF_00115">
    <property type="entry name" value="MscL"/>
    <property type="match status" value="1"/>
</dbReference>
<dbReference type="InterPro" id="IPR001185">
    <property type="entry name" value="MS_channel"/>
</dbReference>
<dbReference type="InterPro" id="IPR037673">
    <property type="entry name" value="MSC/AndL"/>
</dbReference>
<dbReference type="InterPro" id="IPR036019">
    <property type="entry name" value="MscL_channel"/>
</dbReference>
<dbReference type="NCBIfam" id="TIGR00220">
    <property type="entry name" value="mscL"/>
    <property type="match status" value="1"/>
</dbReference>
<dbReference type="NCBIfam" id="NF001843">
    <property type="entry name" value="PRK00567.1-4"/>
    <property type="match status" value="1"/>
</dbReference>
<dbReference type="PANTHER" id="PTHR30266:SF2">
    <property type="entry name" value="LARGE-CONDUCTANCE MECHANOSENSITIVE CHANNEL"/>
    <property type="match status" value="1"/>
</dbReference>
<dbReference type="PANTHER" id="PTHR30266">
    <property type="entry name" value="MECHANOSENSITIVE CHANNEL MSCL"/>
    <property type="match status" value="1"/>
</dbReference>
<dbReference type="Pfam" id="PF01741">
    <property type="entry name" value="MscL"/>
    <property type="match status" value="1"/>
</dbReference>
<dbReference type="PRINTS" id="PR01264">
    <property type="entry name" value="MECHCHANNEL"/>
</dbReference>
<dbReference type="SUPFAM" id="SSF81330">
    <property type="entry name" value="Gated mechanosensitive channel"/>
    <property type="match status" value="1"/>
</dbReference>
<protein>
    <recommendedName>
        <fullName evidence="1">Large-conductance mechanosensitive channel</fullName>
    </recommendedName>
</protein>
<name>MSCL_SYNJB</name>